<comment type="similarity">
    <text evidence="1">Belongs to the gamma-class carbonic anhydrase family.</text>
</comment>
<comment type="caution">
    <text evidence="1">Was originally (Ref.1) thought to be a ferripyochelin binding protein (gene fbp).</text>
</comment>
<evidence type="ECO:0000305" key="1"/>
<keyword id="KW-1185">Reference proteome</keyword>
<accession>P40882</accession>
<organism>
    <name type="scientific">Pseudomonas aeruginosa (strain ATCC 15692 / DSM 22644 / CIP 104116 / JCM 14847 / LMG 12228 / 1C / PRS 101 / PAO1)</name>
    <dbReference type="NCBI Taxonomy" id="208964"/>
    <lineage>
        <taxon>Bacteria</taxon>
        <taxon>Pseudomonadati</taxon>
        <taxon>Pseudomonadota</taxon>
        <taxon>Gammaproteobacteria</taxon>
        <taxon>Pseudomonadales</taxon>
        <taxon>Pseudomonadaceae</taxon>
        <taxon>Pseudomonas</taxon>
    </lineage>
</organism>
<sequence length="174" mass="18509">MKYRLGDARVETHPDSWIAPSAAVIGKVRLDAGASVWFGAVLRGDNELIHIGEHSNVQDGSVMHTDMGYPLTLGKGVTVGHNAMLHGCSVGDYSLVGINAVILNGAKIGKYCIIGANALIPEGKEIPDGSLVMGSPGKVVRELSEPQKKMLEASAAHYVHNARRYARDLVEDPA</sequence>
<reference key="1">
    <citation type="submission" date="1992-03" db="EMBL/GenBank/DDBJ databases">
        <authorList>
            <person name="Macdougall P.C."/>
            <person name="Dennis J.J."/>
            <person name="Sokol P.A."/>
        </authorList>
    </citation>
    <scope>NUCLEOTIDE SEQUENCE [GENOMIC DNA]</scope>
</reference>
<reference key="2">
    <citation type="journal article" date="2000" name="Nature">
        <title>Complete genome sequence of Pseudomonas aeruginosa PAO1, an opportunistic pathogen.</title>
        <authorList>
            <person name="Stover C.K."/>
            <person name="Pham X.-Q.T."/>
            <person name="Erwin A.L."/>
            <person name="Mizoguchi S.D."/>
            <person name="Warrener P."/>
            <person name="Hickey M.J."/>
            <person name="Brinkman F.S.L."/>
            <person name="Hufnagle W.O."/>
            <person name="Kowalik D.J."/>
            <person name="Lagrou M."/>
            <person name="Garber R.L."/>
            <person name="Goltry L."/>
            <person name="Tolentino E."/>
            <person name="Westbrock-Wadman S."/>
            <person name="Yuan Y."/>
            <person name="Brody L.L."/>
            <person name="Coulter S.N."/>
            <person name="Folger K.R."/>
            <person name="Kas A."/>
            <person name="Larbig K."/>
            <person name="Lim R.M."/>
            <person name="Smith K.A."/>
            <person name="Spencer D.H."/>
            <person name="Wong G.K.-S."/>
            <person name="Wu Z."/>
            <person name="Paulsen I.T."/>
            <person name="Reizer J."/>
            <person name="Saier M.H. Jr."/>
            <person name="Hancock R.E.W."/>
            <person name="Lory S."/>
            <person name="Olson M.V."/>
        </authorList>
    </citation>
    <scope>NUCLEOTIDE SEQUENCE [LARGE SCALE GENOMIC DNA]</scope>
    <source>
        <strain>ATCC 15692 / DSM 22644 / CIP 104116 / JCM 14847 / LMG 12228 / 1C / PRS 101 / PAO1</strain>
    </source>
</reference>
<reference key="3">
    <citation type="submission" date="1999-05" db="UniProtKB">
        <authorList>
            <person name="Sokol P.A."/>
        </authorList>
    </citation>
    <scope>CORRECTION OF FUNCTIONAL ASSIGNMENT</scope>
</reference>
<feature type="chain" id="PRO_0000077469" description="Uncharacterized protein PA3753">
    <location>
        <begin position="1"/>
        <end position="174"/>
    </location>
</feature>
<feature type="sequence conflict" description="In Ref. 1; AAB88579." evidence="1" ref="1">
    <original>T</original>
    <variation>A</variation>
    <location>
        <position position="12"/>
    </location>
</feature>
<name>Y3753_PSEAE</name>
<gene>
    <name type="ordered locus">PA3753</name>
</gene>
<proteinExistence type="inferred from homology"/>
<dbReference type="EMBL" id="M82832">
    <property type="protein sequence ID" value="AAB88579.1"/>
    <property type="molecule type" value="Genomic_DNA"/>
</dbReference>
<dbReference type="EMBL" id="AE004091">
    <property type="protein sequence ID" value="AAG07140.1"/>
    <property type="molecule type" value="Genomic_DNA"/>
</dbReference>
<dbReference type="PIR" id="D83176">
    <property type="entry name" value="D83176"/>
</dbReference>
<dbReference type="RefSeq" id="NP_252442.1">
    <property type="nucleotide sequence ID" value="NC_002516.2"/>
</dbReference>
<dbReference type="RefSeq" id="WP_003092662.1">
    <property type="nucleotide sequence ID" value="NZ_QZGE01000001.1"/>
</dbReference>
<dbReference type="SMR" id="P40882"/>
<dbReference type="STRING" id="208964.PA3753"/>
<dbReference type="PaxDb" id="208964-PA3753"/>
<dbReference type="DNASU" id="880438"/>
<dbReference type="GeneID" id="880438"/>
<dbReference type="KEGG" id="pae:PA3753"/>
<dbReference type="PATRIC" id="fig|208964.12.peg.3927"/>
<dbReference type="PseudoCAP" id="PA3753"/>
<dbReference type="HOGENOM" id="CLU_064827_4_1_6"/>
<dbReference type="InParanoid" id="P40882"/>
<dbReference type="OrthoDB" id="9803036at2"/>
<dbReference type="PhylomeDB" id="P40882"/>
<dbReference type="BioCyc" id="PAER208964:G1FZ6-3824-MONOMER"/>
<dbReference type="Proteomes" id="UP000002438">
    <property type="component" value="Chromosome"/>
</dbReference>
<dbReference type="CDD" id="cd04645">
    <property type="entry name" value="LbH_gamma_CA_like"/>
    <property type="match status" value="1"/>
</dbReference>
<dbReference type="Gene3D" id="2.160.10.10">
    <property type="entry name" value="Hexapeptide repeat proteins"/>
    <property type="match status" value="1"/>
</dbReference>
<dbReference type="InterPro" id="IPR001451">
    <property type="entry name" value="Hexapep"/>
</dbReference>
<dbReference type="InterPro" id="IPR047324">
    <property type="entry name" value="LbH_gamma_CA-like"/>
</dbReference>
<dbReference type="InterPro" id="IPR050484">
    <property type="entry name" value="Transf_Hexapept/Carb_Anhydrase"/>
</dbReference>
<dbReference type="InterPro" id="IPR011004">
    <property type="entry name" value="Trimer_LpxA-like_sf"/>
</dbReference>
<dbReference type="PANTHER" id="PTHR13061">
    <property type="entry name" value="DYNACTIN SUBUNIT P25"/>
    <property type="match status" value="1"/>
</dbReference>
<dbReference type="PANTHER" id="PTHR13061:SF29">
    <property type="entry name" value="GAMMA CARBONIC ANHYDRASE-LIKE 1, MITOCHONDRIAL-RELATED"/>
    <property type="match status" value="1"/>
</dbReference>
<dbReference type="Pfam" id="PF00132">
    <property type="entry name" value="Hexapep"/>
    <property type="match status" value="1"/>
</dbReference>
<dbReference type="SUPFAM" id="SSF51161">
    <property type="entry name" value="Trimeric LpxA-like enzymes"/>
    <property type="match status" value="1"/>
</dbReference>
<protein>
    <recommendedName>
        <fullName>Uncharacterized protein PA3753</fullName>
    </recommendedName>
</protein>